<sequence length="518" mass="57747">MTQLHFDNRLRQQLPGYQEEGARRREVRAAWSAVMPTPVAAPYLIAHSAEMAHVLGLDASEVASAAFAQVFGGNALYPGMQPWAVNYGGHQFGHWAGQLGDGRAISLGEAIGIDGGRYELQLKGAGPTPYSRGADGRAVLRSSIREFLCSESMHHLGVPTTRALSLVGTGDAVVRDMFYDGRPQREPGAIVCRVAPSFIRFGNFELPSARGDNALLRQWVDFTIARDFPELVGTAEALYADWFAQVCQRTAVMVAHWMRVGFVHGVMNTDNMSILGLTIDYGPYGWVDDYDPDWTPNTTDAQGRRYRFGTQPQVAYWNLGRLAQAMAPLFADQAPLQQGLNRFRDTYLACDRRDTAAKLGLAECRDEDLELIDALRALMRDAEMDMTLTFRGLIDLSPVHPDPAQLHDAFYDDHKRVASASQLQEWLQRYAARLQQDALSPDERRALMRLANPRYVLRNYLAQQAIDQAEQGDPSGVQELLEVMRRPYDDQSGRAAFAARRPEWARDRAGCSMLSCSS</sequence>
<protein>
    <recommendedName>
        <fullName evidence="1">Protein nucleotidyltransferase YdiU</fullName>
        <ecNumber evidence="1">2.7.7.-</ecNumber>
    </recommendedName>
    <alternativeName>
        <fullName evidence="1">Protein adenylyltransferase YdiU</fullName>
        <ecNumber evidence="1">2.7.7.108</ecNumber>
    </alternativeName>
    <alternativeName>
        <fullName evidence="1">Protein uridylyltransferase YdiU</fullName>
        <ecNumber evidence="1">2.7.7.-</ecNumber>
    </alternativeName>
</protein>
<name>SELO_XANOR</name>
<reference key="1">
    <citation type="journal article" date="2005" name="Nucleic Acids Res.">
        <title>The genome sequence of Xanthomonas oryzae pathovar oryzae KACC10331, the bacterial blight pathogen of rice.</title>
        <authorList>
            <person name="Lee B.-M."/>
            <person name="Park Y.-J."/>
            <person name="Park D.-S."/>
            <person name="Kang H.-W."/>
            <person name="Kim J.-G."/>
            <person name="Song E.-S."/>
            <person name="Park I.-C."/>
            <person name="Yoon U.-H."/>
            <person name="Hahn J.-H."/>
            <person name="Koo B.-S."/>
            <person name="Lee G.-B."/>
            <person name="Kim H."/>
            <person name="Park H.-S."/>
            <person name="Yoon K.-O."/>
            <person name="Kim J.-H."/>
            <person name="Jung C.-H."/>
            <person name="Koh N.-H."/>
            <person name="Seo J.-S."/>
            <person name="Go S.-J."/>
        </authorList>
    </citation>
    <scope>NUCLEOTIDE SEQUENCE [LARGE SCALE GENOMIC DNA]</scope>
    <source>
        <strain>KACC10331 / KXO85</strain>
    </source>
</reference>
<proteinExistence type="inferred from homology"/>
<evidence type="ECO:0000255" key="1">
    <source>
        <dbReference type="HAMAP-Rule" id="MF_00692"/>
    </source>
</evidence>
<evidence type="ECO:0000305" key="2"/>
<feature type="chain" id="PRO_0000271881" description="Protein nucleotidyltransferase YdiU">
    <location>
        <begin position="1"/>
        <end position="518"/>
    </location>
</feature>
<feature type="active site" description="Proton acceptor" evidence="1">
    <location>
        <position position="270"/>
    </location>
</feature>
<feature type="binding site" evidence="1">
    <location>
        <position position="100"/>
    </location>
    <ligand>
        <name>ATP</name>
        <dbReference type="ChEBI" id="CHEBI:30616"/>
    </ligand>
</feature>
<feature type="binding site" evidence="1">
    <location>
        <position position="102"/>
    </location>
    <ligand>
        <name>ATP</name>
        <dbReference type="ChEBI" id="CHEBI:30616"/>
    </ligand>
</feature>
<feature type="binding site" evidence="1">
    <location>
        <position position="103"/>
    </location>
    <ligand>
        <name>ATP</name>
        <dbReference type="ChEBI" id="CHEBI:30616"/>
    </ligand>
</feature>
<feature type="binding site" evidence="1">
    <location>
        <position position="123"/>
    </location>
    <ligand>
        <name>ATP</name>
        <dbReference type="ChEBI" id="CHEBI:30616"/>
    </ligand>
</feature>
<feature type="binding site" evidence="1">
    <location>
        <position position="135"/>
    </location>
    <ligand>
        <name>ATP</name>
        <dbReference type="ChEBI" id="CHEBI:30616"/>
    </ligand>
</feature>
<feature type="binding site" evidence="1">
    <location>
        <position position="136"/>
    </location>
    <ligand>
        <name>ATP</name>
        <dbReference type="ChEBI" id="CHEBI:30616"/>
    </ligand>
</feature>
<feature type="binding site" evidence="1">
    <location>
        <position position="193"/>
    </location>
    <ligand>
        <name>ATP</name>
        <dbReference type="ChEBI" id="CHEBI:30616"/>
    </ligand>
</feature>
<feature type="binding site" evidence="1">
    <location>
        <position position="200"/>
    </location>
    <ligand>
        <name>ATP</name>
        <dbReference type="ChEBI" id="CHEBI:30616"/>
    </ligand>
</feature>
<feature type="binding site" evidence="1">
    <location>
        <position position="271"/>
    </location>
    <ligand>
        <name>Mg(2+)</name>
        <dbReference type="ChEBI" id="CHEBI:18420"/>
    </ligand>
</feature>
<feature type="binding site" evidence="1">
    <location>
        <position position="280"/>
    </location>
    <ligand>
        <name>ATP</name>
        <dbReference type="ChEBI" id="CHEBI:30616"/>
    </ligand>
</feature>
<feature type="binding site" evidence="1">
    <location>
        <position position="280"/>
    </location>
    <ligand>
        <name>Mg(2+)</name>
        <dbReference type="ChEBI" id="CHEBI:18420"/>
    </ligand>
</feature>
<keyword id="KW-0067">ATP-binding</keyword>
<keyword id="KW-0460">Magnesium</keyword>
<keyword id="KW-0464">Manganese</keyword>
<keyword id="KW-0479">Metal-binding</keyword>
<keyword id="KW-0547">Nucleotide-binding</keyword>
<keyword id="KW-0548">Nucleotidyltransferase</keyword>
<keyword id="KW-1185">Reference proteome</keyword>
<keyword id="KW-0808">Transferase</keyword>
<dbReference type="EC" id="2.7.7.-" evidence="1"/>
<dbReference type="EC" id="2.7.7.108" evidence="1"/>
<dbReference type="EMBL" id="AE013598">
    <property type="protein sequence ID" value="AAW75972.1"/>
    <property type="status" value="ALT_INIT"/>
    <property type="molecule type" value="Genomic_DNA"/>
</dbReference>
<dbReference type="SMR" id="Q5GZ99"/>
<dbReference type="STRING" id="291331.XOO2718"/>
<dbReference type="KEGG" id="xoo:XOO2718"/>
<dbReference type="PATRIC" id="fig|291331.8.peg.3006"/>
<dbReference type="HOGENOM" id="CLU_010245_4_0_6"/>
<dbReference type="Proteomes" id="UP000006735">
    <property type="component" value="Chromosome"/>
</dbReference>
<dbReference type="GO" id="GO:0070733">
    <property type="term" value="F:AMPylase activity"/>
    <property type="evidence" value="ECO:0007669"/>
    <property type="project" value="RHEA"/>
</dbReference>
<dbReference type="GO" id="GO:0005524">
    <property type="term" value="F:ATP binding"/>
    <property type="evidence" value="ECO:0007669"/>
    <property type="project" value="UniProtKB-UniRule"/>
</dbReference>
<dbReference type="GO" id="GO:0000287">
    <property type="term" value="F:magnesium ion binding"/>
    <property type="evidence" value="ECO:0007669"/>
    <property type="project" value="UniProtKB-UniRule"/>
</dbReference>
<dbReference type="HAMAP" id="MF_00692">
    <property type="entry name" value="YdiU_SelO"/>
    <property type="match status" value="1"/>
</dbReference>
<dbReference type="InterPro" id="IPR003846">
    <property type="entry name" value="SelO"/>
</dbReference>
<dbReference type="NCBIfam" id="NF000658">
    <property type="entry name" value="PRK00029.1"/>
    <property type="match status" value="1"/>
</dbReference>
<dbReference type="PANTHER" id="PTHR32057">
    <property type="entry name" value="PROTEIN ADENYLYLTRANSFERASE SELO, MITOCHONDRIAL"/>
    <property type="match status" value="1"/>
</dbReference>
<dbReference type="PANTHER" id="PTHR32057:SF14">
    <property type="entry name" value="PROTEIN ADENYLYLTRANSFERASE SELO, MITOCHONDRIAL"/>
    <property type="match status" value="1"/>
</dbReference>
<dbReference type="Pfam" id="PF02696">
    <property type="entry name" value="SelO"/>
    <property type="match status" value="1"/>
</dbReference>
<comment type="function">
    <text evidence="1">Nucleotidyltransferase involved in the post-translational modification of proteins. It can catalyze the addition of adenosine monophosphate (AMP) or uridine monophosphate (UMP) to a protein, resulting in modifications known as AMPylation and UMPylation.</text>
</comment>
<comment type="catalytic activity">
    <reaction evidence="1">
        <text>L-seryl-[protein] + ATP = 3-O-(5'-adenylyl)-L-seryl-[protein] + diphosphate</text>
        <dbReference type="Rhea" id="RHEA:58120"/>
        <dbReference type="Rhea" id="RHEA-COMP:9863"/>
        <dbReference type="Rhea" id="RHEA-COMP:15073"/>
        <dbReference type="ChEBI" id="CHEBI:29999"/>
        <dbReference type="ChEBI" id="CHEBI:30616"/>
        <dbReference type="ChEBI" id="CHEBI:33019"/>
        <dbReference type="ChEBI" id="CHEBI:142516"/>
        <dbReference type="EC" id="2.7.7.108"/>
    </reaction>
</comment>
<comment type="catalytic activity">
    <reaction evidence="1">
        <text>L-threonyl-[protein] + ATP = 3-O-(5'-adenylyl)-L-threonyl-[protein] + diphosphate</text>
        <dbReference type="Rhea" id="RHEA:54292"/>
        <dbReference type="Rhea" id="RHEA-COMP:11060"/>
        <dbReference type="Rhea" id="RHEA-COMP:13847"/>
        <dbReference type="ChEBI" id="CHEBI:30013"/>
        <dbReference type="ChEBI" id="CHEBI:30616"/>
        <dbReference type="ChEBI" id="CHEBI:33019"/>
        <dbReference type="ChEBI" id="CHEBI:138113"/>
        <dbReference type="EC" id="2.7.7.108"/>
    </reaction>
</comment>
<comment type="catalytic activity">
    <reaction evidence="1">
        <text>L-tyrosyl-[protein] + ATP = O-(5'-adenylyl)-L-tyrosyl-[protein] + diphosphate</text>
        <dbReference type="Rhea" id="RHEA:54288"/>
        <dbReference type="Rhea" id="RHEA-COMP:10136"/>
        <dbReference type="Rhea" id="RHEA-COMP:13846"/>
        <dbReference type="ChEBI" id="CHEBI:30616"/>
        <dbReference type="ChEBI" id="CHEBI:33019"/>
        <dbReference type="ChEBI" id="CHEBI:46858"/>
        <dbReference type="ChEBI" id="CHEBI:83624"/>
        <dbReference type="EC" id="2.7.7.108"/>
    </reaction>
</comment>
<comment type="catalytic activity">
    <reaction evidence="1">
        <text>L-histidyl-[protein] + UTP = N(tele)-(5'-uridylyl)-L-histidyl-[protein] + diphosphate</text>
        <dbReference type="Rhea" id="RHEA:83891"/>
        <dbReference type="Rhea" id="RHEA-COMP:9745"/>
        <dbReference type="Rhea" id="RHEA-COMP:20239"/>
        <dbReference type="ChEBI" id="CHEBI:29979"/>
        <dbReference type="ChEBI" id="CHEBI:33019"/>
        <dbReference type="ChEBI" id="CHEBI:46398"/>
        <dbReference type="ChEBI" id="CHEBI:233474"/>
    </reaction>
</comment>
<comment type="catalytic activity">
    <reaction evidence="1">
        <text>L-seryl-[protein] + UTP = O-(5'-uridylyl)-L-seryl-[protein] + diphosphate</text>
        <dbReference type="Rhea" id="RHEA:64604"/>
        <dbReference type="Rhea" id="RHEA-COMP:9863"/>
        <dbReference type="Rhea" id="RHEA-COMP:16635"/>
        <dbReference type="ChEBI" id="CHEBI:29999"/>
        <dbReference type="ChEBI" id="CHEBI:33019"/>
        <dbReference type="ChEBI" id="CHEBI:46398"/>
        <dbReference type="ChEBI" id="CHEBI:156051"/>
    </reaction>
</comment>
<comment type="catalytic activity">
    <reaction evidence="1">
        <text>L-tyrosyl-[protein] + UTP = O-(5'-uridylyl)-L-tyrosyl-[protein] + diphosphate</text>
        <dbReference type="Rhea" id="RHEA:83887"/>
        <dbReference type="Rhea" id="RHEA-COMP:10136"/>
        <dbReference type="Rhea" id="RHEA-COMP:20238"/>
        <dbReference type="ChEBI" id="CHEBI:33019"/>
        <dbReference type="ChEBI" id="CHEBI:46398"/>
        <dbReference type="ChEBI" id="CHEBI:46858"/>
        <dbReference type="ChEBI" id="CHEBI:90602"/>
    </reaction>
</comment>
<comment type="cofactor">
    <cofactor evidence="1">
        <name>Mg(2+)</name>
        <dbReference type="ChEBI" id="CHEBI:18420"/>
    </cofactor>
    <cofactor evidence="1">
        <name>Mn(2+)</name>
        <dbReference type="ChEBI" id="CHEBI:29035"/>
    </cofactor>
</comment>
<comment type="similarity">
    <text evidence="1">Belongs to the SELO family.</text>
</comment>
<comment type="sequence caution" evidence="2">
    <conflict type="erroneous initiation">
        <sequence resource="EMBL-CDS" id="AAW75972"/>
    </conflict>
</comment>
<gene>
    <name evidence="1" type="primary">ydiU</name>
    <name evidence="1" type="synonym">selO</name>
    <name type="ordered locus">XOO2718</name>
</gene>
<accession>Q5GZ99</accession>
<organism>
    <name type="scientific">Xanthomonas oryzae pv. oryzae (strain KACC10331 / KXO85)</name>
    <dbReference type="NCBI Taxonomy" id="291331"/>
    <lineage>
        <taxon>Bacteria</taxon>
        <taxon>Pseudomonadati</taxon>
        <taxon>Pseudomonadota</taxon>
        <taxon>Gammaproteobacteria</taxon>
        <taxon>Lysobacterales</taxon>
        <taxon>Lysobacteraceae</taxon>
        <taxon>Xanthomonas</taxon>
    </lineage>
</organism>